<accession>Q4VAA2</accession>
<accession>Q6P6L7</accession>
<accession>Q920C7</accession>
<accession>Q920I4</accession>
<reference key="1">
    <citation type="journal article" date="2002" name="Biochim. Biophys. Acta">
        <title>Novel mRNA molecules are induced in hypertrophied ventricles of carnitine-deficient mice and belong to a family of up-regulated gene in cells overexpressing c-erbB-2.</title>
        <authorList>
            <person name="Fukumaru S."/>
            <person name="Horiuchi M."/>
            <person name="Kobayashi K."/>
            <person name="Jalil M.A."/>
            <person name="Iijima M."/>
            <person name="Masuda M."/>
            <person name="Begum L."/>
            <person name="Higashi M."/>
            <person name="Wakana S."/>
            <person name="Kanzaki T."/>
            <person name="Saheki T."/>
        </authorList>
    </citation>
    <scope>NUCLEOTIDE SEQUENCE [GENOMIC DNA / MRNA] (ISOFORMS 1 AND 2)</scope>
    <scope>TISSUE SPECIFICITY</scope>
    <source>
        <strain>129/SvJ</strain>
        <strain>C3H/HeJ</strain>
    </source>
</reference>
<reference key="2">
    <citation type="journal article" date="2003" name="FEBS Lett.">
        <title>Molecular cloning and characterization of TPP36 and its isoform TPP32, novel substrates of Abl tyrosine kinase.</title>
        <authorList>
            <person name="Tsuchiya K."/>
            <person name="Kawano Y."/>
            <person name="Kojima T."/>
            <person name="Nagata K."/>
            <person name="Takao T."/>
            <person name="Okada M."/>
            <person name="Shinohara H."/>
            <person name="Maki K."/>
            <person name="Toyama-Sorimachi N."/>
            <person name="Miyasaka N."/>
            <person name="Watanabe M."/>
            <person name="Karasuyama H."/>
        </authorList>
    </citation>
    <scope>NUCLEOTIDE SEQUENCE [MRNA] (ISOFORM 1)</scope>
    <scope>ALTERNATIVE SPLICING (ISOFORMS 1 AND 2)</scope>
    <scope>PHOSPHORYLATION AT TYR-120</scope>
    <scope>ACETYLATION AT ALA-2</scope>
    <scope>TISSUE SPECIFICITY</scope>
    <scope>SUBCELLULAR LOCATION</scope>
    <scope>IDENTIFICATION BY MASS SPECTROMETRY</scope>
</reference>
<reference key="3">
    <citation type="journal article" date="2004" name="Genome Res.">
        <title>The status, quality, and expansion of the NIH full-length cDNA project: the Mammalian Gene Collection (MGC).</title>
        <authorList>
            <consortium name="The MGC Project Team"/>
        </authorList>
    </citation>
    <scope>NUCLEOTIDE SEQUENCE [LARGE SCALE MRNA] (ISOFORM 1)</scope>
    <source>
        <strain>NMRI</strain>
        <tissue>Limb</tissue>
        <tissue>Mammary tumor</tissue>
        <tissue>Olfactory epithelium</tissue>
    </source>
</reference>
<reference key="4">
    <citation type="journal article" date="2005" name="Nat. Biotechnol.">
        <title>Immunoaffinity profiling of tyrosine phosphorylation in cancer cells.</title>
        <authorList>
            <person name="Rush J."/>
            <person name="Moritz A."/>
            <person name="Lee K.A."/>
            <person name="Guo A."/>
            <person name="Goss V.L."/>
            <person name="Spek E.J."/>
            <person name="Zhang H."/>
            <person name="Zha X.-M."/>
            <person name="Polakiewicz R.D."/>
            <person name="Comb M.J."/>
        </authorList>
    </citation>
    <scope>IDENTIFICATION BY MASS SPECTROMETRY [LARGE SCALE ANALYSIS]</scope>
</reference>
<reference key="5">
    <citation type="journal article" date="2007" name="J. Immunol.">
        <title>Quantitative time-resolved phosphoproteomic analysis of mast cell signaling.</title>
        <authorList>
            <person name="Cao L."/>
            <person name="Yu K."/>
            <person name="Banh C."/>
            <person name="Nguyen V."/>
            <person name="Ritz A."/>
            <person name="Raphael B.J."/>
            <person name="Kawakami Y."/>
            <person name="Kawakami T."/>
            <person name="Salomon A.R."/>
        </authorList>
    </citation>
    <scope>PHOSPHORYLATION [LARGE SCALE ANALYSIS] AT TYR-213</scope>
    <scope>IDENTIFICATION BY MASS SPECTROMETRY [LARGE SCALE ANALYSIS]</scope>
    <source>
        <tissue>Mast cell</tissue>
    </source>
</reference>
<reference key="6">
    <citation type="journal article" date="2009" name="Mol. Cell. Proteomics">
        <title>Large scale localization of protein phosphorylation by use of electron capture dissociation mass spectrometry.</title>
        <authorList>
            <person name="Sweet S.M."/>
            <person name="Bailey C.M."/>
            <person name="Cunningham D.L."/>
            <person name="Heath J.K."/>
            <person name="Cooper H.J."/>
        </authorList>
    </citation>
    <scope>PHOSPHORYLATION [LARGE SCALE ANALYSIS] AT TYR-213</scope>
    <scope>IDENTIFICATION BY MASS SPECTROMETRY [LARGE SCALE ANALYSIS]</scope>
    <source>
        <tissue>Embryonic fibroblast</tissue>
    </source>
</reference>
<reference key="7">
    <citation type="journal article" date="2010" name="Cell">
        <title>A tissue-specific atlas of mouse protein phosphorylation and expression.</title>
        <authorList>
            <person name="Huttlin E.L."/>
            <person name="Jedrychowski M.P."/>
            <person name="Elias J.E."/>
            <person name="Goswami T."/>
            <person name="Rad R."/>
            <person name="Beausoleil S.A."/>
            <person name="Villen J."/>
            <person name="Haas W."/>
            <person name="Sowa M.E."/>
            <person name="Gygi S.P."/>
        </authorList>
    </citation>
    <scope>IDENTIFICATION BY MASS SPECTROMETRY [LARGE SCALE ANALYSIS]</scope>
    <source>
        <tissue>Brain</tissue>
        <tissue>Brown adipose tissue</tissue>
        <tissue>Heart</tissue>
        <tissue>Kidney</tissue>
        <tissue>Liver</tissue>
        <tissue>Lung</tissue>
        <tissue>Pancreas</tissue>
        <tissue>Spleen</tissue>
        <tissue>Testis</tissue>
    </source>
</reference>
<dbReference type="EMBL" id="AF215660">
    <property type="protein sequence ID" value="AAL27860.1"/>
    <property type="molecule type" value="mRNA"/>
</dbReference>
<dbReference type="EMBL" id="AF320340">
    <property type="protein sequence ID" value="AAL30162.1"/>
    <property type="molecule type" value="mRNA"/>
</dbReference>
<dbReference type="EMBL" id="AF414107">
    <property type="protein sequence ID" value="AAL65134.1"/>
    <property type="molecule type" value="Genomic_DNA"/>
</dbReference>
<dbReference type="EMBL" id="AF414103">
    <property type="protein sequence ID" value="AAL65134.1"/>
    <property type="status" value="JOINED"/>
    <property type="molecule type" value="Genomic_DNA"/>
</dbReference>
<dbReference type="EMBL" id="AF414104">
    <property type="protein sequence ID" value="AAL65134.1"/>
    <property type="status" value="JOINED"/>
    <property type="molecule type" value="Genomic_DNA"/>
</dbReference>
<dbReference type="EMBL" id="AF414105">
    <property type="protein sequence ID" value="AAL65134.1"/>
    <property type="status" value="JOINED"/>
    <property type="molecule type" value="Genomic_DNA"/>
</dbReference>
<dbReference type="EMBL" id="AF414106">
    <property type="protein sequence ID" value="AAL65134.1"/>
    <property type="status" value="JOINED"/>
    <property type="molecule type" value="Genomic_DNA"/>
</dbReference>
<dbReference type="EMBL" id="AF414107">
    <property type="protein sequence ID" value="AAL65135.1"/>
    <property type="molecule type" value="Genomic_DNA"/>
</dbReference>
<dbReference type="EMBL" id="AF414103">
    <property type="protein sequence ID" value="AAL65135.1"/>
    <property type="status" value="JOINED"/>
    <property type="molecule type" value="Genomic_DNA"/>
</dbReference>
<dbReference type="EMBL" id="AF414104">
    <property type="protein sequence ID" value="AAL65135.1"/>
    <property type="status" value="JOINED"/>
    <property type="molecule type" value="Genomic_DNA"/>
</dbReference>
<dbReference type="EMBL" id="AF414105">
    <property type="protein sequence ID" value="AAL65135.1"/>
    <property type="status" value="JOINED"/>
    <property type="molecule type" value="Genomic_DNA"/>
</dbReference>
<dbReference type="EMBL" id="AF414106">
    <property type="protein sequence ID" value="AAL65135.1"/>
    <property type="status" value="JOINED"/>
    <property type="molecule type" value="Genomic_DNA"/>
</dbReference>
<dbReference type="EMBL" id="AB046372">
    <property type="protein sequence ID" value="BAB82988.1"/>
    <property type="molecule type" value="mRNA"/>
</dbReference>
<dbReference type="EMBL" id="BC052770">
    <property type="protein sequence ID" value="AAH52770.1"/>
    <property type="molecule type" value="mRNA"/>
</dbReference>
<dbReference type="EMBL" id="BC062156">
    <property type="protein sequence ID" value="AAH62156.1"/>
    <property type="molecule type" value="mRNA"/>
</dbReference>
<dbReference type="EMBL" id="BC096479">
    <property type="protein sequence ID" value="AAH96479.1"/>
    <property type="molecule type" value="mRNA"/>
</dbReference>
<dbReference type="CCDS" id="CCDS23454.1">
    <molecule id="Q4VAA2-1"/>
</dbReference>
<dbReference type="CCDS" id="CCDS40748.1">
    <molecule id="Q4VAA2-2"/>
</dbReference>
<dbReference type="RefSeq" id="NP_780774.1">
    <molecule id="Q4VAA2-2"/>
    <property type="nucleotide sequence ID" value="NM_175565.4"/>
</dbReference>
<dbReference type="RefSeq" id="NP_787027.1">
    <molecule id="Q4VAA2-1"/>
    <property type="nucleotide sequence ID" value="NM_175833.3"/>
</dbReference>
<dbReference type="SMR" id="Q4VAA2"/>
<dbReference type="BioGRID" id="236470">
    <property type="interactions" value="1"/>
</dbReference>
<dbReference type="FunCoup" id="Q4VAA2">
    <property type="interactions" value="2942"/>
</dbReference>
<dbReference type="IntAct" id="Q4VAA2">
    <property type="interactions" value="1"/>
</dbReference>
<dbReference type="STRING" id="10090.ENSMUSP00000044420"/>
<dbReference type="GlyGen" id="Q4VAA2">
    <property type="glycosylation" value="2 sites, 1 O-linked glycan (2 sites)"/>
</dbReference>
<dbReference type="iPTMnet" id="Q4VAA2"/>
<dbReference type="PhosphoSitePlus" id="Q4VAA2"/>
<dbReference type="CPTAC" id="non-CPTAC-4022"/>
<dbReference type="jPOST" id="Q4VAA2"/>
<dbReference type="PaxDb" id="10090-ENSMUSP00000044420"/>
<dbReference type="PeptideAtlas" id="Q4VAA2"/>
<dbReference type="ProteomicsDB" id="283872">
    <molecule id="Q4VAA2-1"/>
</dbReference>
<dbReference type="ProteomicsDB" id="283873">
    <molecule id="Q4VAA2-2"/>
</dbReference>
<dbReference type="Pumba" id="Q4VAA2"/>
<dbReference type="Antibodypedia" id="33371">
    <property type="antibodies" value="89 antibodies from 17 providers"/>
</dbReference>
<dbReference type="DNASU" id="321022"/>
<dbReference type="Ensembl" id="ENSMUST00000035484.11">
    <molecule id="Q4VAA2-1"/>
    <property type="protein sequence ID" value="ENSMUSP00000044420.4"/>
    <property type="gene ID" value="ENSMUSG00000032803.16"/>
</dbReference>
<dbReference type="Ensembl" id="ENSMUST00000072249.13">
    <molecule id="Q4VAA2-2"/>
    <property type="protein sequence ID" value="ENSMUSP00000072101.7"/>
    <property type="gene ID" value="ENSMUSG00000032803.16"/>
</dbReference>
<dbReference type="GeneID" id="321022"/>
<dbReference type="KEGG" id="mmu:321022"/>
<dbReference type="UCSC" id="uc009rgo.1">
    <molecule id="Q4VAA2-1"/>
    <property type="organism name" value="mouse"/>
</dbReference>
<dbReference type="UCSC" id="uc009rgq.1">
    <molecule id="Q4VAA2-2"/>
    <property type="organism name" value="mouse"/>
</dbReference>
<dbReference type="AGR" id="MGI:2448759"/>
<dbReference type="CTD" id="55573"/>
<dbReference type="MGI" id="MGI:2448759">
    <property type="gene designation" value="Cdv3"/>
</dbReference>
<dbReference type="VEuPathDB" id="HostDB:ENSMUSG00000032803"/>
<dbReference type="eggNOG" id="ENOG502QRFT">
    <property type="taxonomic scope" value="Eukaryota"/>
</dbReference>
<dbReference type="GeneTree" id="ENSGT00390000000805"/>
<dbReference type="HOGENOM" id="CLU_089760_1_0_1"/>
<dbReference type="InParanoid" id="Q4VAA2"/>
<dbReference type="OMA" id="PWNKPVE"/>
<dbReference type="OrthoDB" id="6288097at2759"/>
<dbReference type="PhylomeDB" id="Q4VAA2"/>
<dbReference type="TreeFam" id="TF315891"/>
<dbReference type="BioGRID-ORCS" id="321022">
    <property type="hits" value="3 hits in 74 CRISPR screens"/>
</dbReference>
<dbReference type="ChiTaRS" id="Cdv3">
    <property type="organism name" value="mouse"/>
</dbReference>
<dbReference type="PRO" id="PR:Q4VAA2"/>
<dbReference type="Proteomes" id="UP000000589">
    <property type="component" value="Chromosome 9"/>
</dbReference>
<dbReference type="RNAct" id="Q4VAA2">
    <property type="molecule type" value="protein"/>
</dbReference>
<dbReference type="Bgee" id="ENSMUSG00000032803">
    <property type="expression patterns" value="Expressed in floor plate of midbrain and 255 other cell types or tissues"/>
</dbReference>
<dbReference type="ExpressionAtlas" id="Q4VAA2">
    <property type="expression patterns" value="baseline and differential"/>
</dbReference>
<dbReference type="GO" id="GO:0005737">
    <property type="term" value="C:cytoplasm"/>
    <property type="evidence" value="ECO:0000314"/>
    <property type="project" value="MGI"/>
</dbReference>
<dbReference type="GO" id="GO:0005829">
    <property type="term" value="C:cytosol"/>
    <property type="evidence" value="ECO:0007669"/>
    <property type="project" value="Ensembl"/>
</dbReference>
<dbReference type="GO" id="GO:0005886">
    <property type="term" value="C:plasma membrane"/>
    <property type="evidence" value="ECO:0007669"/>
    <property type="project" value="Ensembl"/>
</dbReference>
<dbReference type="InterPro" id="IPR026806">
    <property type="entry name" value="CDV3"/>
</dbReference>
<dbReference type="PANTHER" id="PTHR16284">
    <property type="entry name" value="PROTEIN CDV3 HOMOLOG"/>
    <property type="match status" value="1"/>
</dbReference>
<dbReference type="PANTHER" id="PTHR16284:SF13">
    <property type="entry name" value="PROTEIN CDV3 HOMOLOG"/>
    <property type="match status" value="1"/>
</dbReference>
<dbReference type="Pfam" id="PF15359">
    <property type="entry name" value="CDV3"/>
    <property type="match status" value="1"/>
</dbReference>
<keyword id="KW-0007">Acetylation</keyword>
<keyword id="KW-0025">Alternative splicing</keyword>
<keyword id="KW-0963">Cytoplasm</keyword>
<keyword id="KW-0597">Phosphoprotein</keyword>
<keyword id="KW-1185">Reference proteome</keyword>
<sequence>MAETEERSLDNFFAKRDKKKKKERSSRAANAASGAGGSSAAAGSRPGDGGSLGSGARSGDGGSLGSGSRSGDGGSSGSGARSGDGGSSRSGDGGSAGPAGKAITKDENEWKEFEQREVDYSGLRVQAMQISEKEDDDNEKREDPGDNWEEGGGGSGAEKSSGPWNKTAPVQAPPAPVTVTETPEPAMPSGVYRPPGARLTTTRKTPQGPPEIYSDTQFPSLQSTAKHVESRKDKEMEKSFEVVRHKNRDREEVSKNQALKLQLDNQYAVLENQKYSHTQYS</sequence>
<name>CDV3_MOUSE</name>
<organism>
    <name type="scientific">Mus musculus</name>
    <name type="common">Mouse</name>
    <dbReference type="NCBI Taxonomy" id="10090"/>
    <lineage>
        <taxon>Eukaryota</taxon>
        <taxon>Metazoa</taxon>
        <taxon>Chordata</taxon>
        <taxon>Craniata</taxon>
        <taxon>Vertebrata</taxon>
        <taxon>Euteleostomi</taxon>
        <taxon>Mammalia</taxon>
        <taxon>Eutheria</taxon>
        <taxon>Euarchontoglires</taxon>
        <taxon>Glires</taxon>
        <taxon>Rodentia</taxon>
        <taxon>Myomorpha</taxon>
        <taxon>Muroidea</taxon>
        <taxon>Muridae</taxon>
        <taxon>Murinae</taxon>
        <taxon>Mus</taxon>
        <taxon>Mus</taxon>
    </lineage>
</organism>
<proteinExistence type="evidence at protein level"/>
<protein>
    <recommendedName>
        <fullName>Protein CDV3</fullName>
    </recommendedName>
    <alternativeName>
        <fullName>Carnitine deficiency-associated protein 3</fullName>
    </alternativeName>
    <alternativeName>
        <fullName>Tyrosine-phosphorylated protein 36</fullName>
        <shortName>TPP36</shortName>
    </alternativeName>
</protein>
<comment type="subcellular location">
    <subcellularLocation>
        <location evidence="5">Cytoplasm</location>
    </subcellularLocation>
</comment>
<comment type="alternative products">
    <event type="alternative splicing"/>
    <isoform>
        <id>Q4VAA2-1</id>
        <name>1</name>
        <name>B</name>
        <sequence type="displayed"/>
    </isoform>
    <isoform>
        <id>Q4VAA2-2</id>
        <name>2</name>
        <name>A</name>
        <sequence type="described" ref="VSP_027762 VSP_027763"/>
    </isoform>
</comment>
<comment type="tissue specificity">
    <text evidence="4 5">Ubiquitously expressed (at protein level). Up-regulated in ventricles of juvenile visceral steatosis mice.</text>
</comment>
<comment type="PTM">
    <text evidence="5">Isoform 1 and isoform 2 are phosphorylated on tyrosines by ABL1 in B-cells.</text>
</comment>
<comment type="similarity">
    <text evidence="7">Belongs to the CDV3 family.</text>
</comment>
<evidence type="ECO:0000250" key="1">
    <source>
        <dbReference type="UniProtKB" id="Q5XIM5"/>
    </source>
</evidence>
<evidence type="ECO:0000250" key="2">
    <source>
        <dbReference type="UniProtKB" id="Q9UKY7"/>
    </source>
</evidence>
<evidence type="ECO:0000256" key="3">
    <source>
        <dbReference type="SAM" id="MobiDB-lite"/>
    </source>
</evidence>
<evidence type="ECO:0000269" key="4">
    <source>
    </source>
</evidence>
<evidence type="ECO:0000269" key="5">
    <source>
    </source>
</evidence>
<evidence type="ECO:0000303" key="6">
    <source>
    </source>
</evidence>
<evidence type="ECO:0000305" key="7"/>
<evidence type="ECO:0007744" key="8">
    <source>
    </source>
</evidence>
<evidence type="ECO:0007744" key="9">
    <source>
    </source>
</evidence>
<feature type="initiator methionine" description="Removed" evidence="5">
    <location>
        <position position="1"/>
    </location>
</feature>
<feature type="chain" id="PRO_0000299561" description="Protein CDV3">
    <location>
        <begin position="2"/>
        <end position="281"/>
    </location>
</feature>
<feature type="region of interest" description="Disordered" evidence="3">
    <location>
        <begin position="1"/>
        <end position="257"/>
    </location>
</feature>
<feature type="compositionally biased region" description="Basic and acidic residues" evidence="3">
    <location>
        <begin position="1"/>
        <end position="15"/>
    </location>
</feature>
<feature type="compositionally biased region" description="Low complexity" evidence="3">
    <location>
        <begin position="27"/>
        <end position="45"/>
    </location>
</feature>
<feature type="compositionally biased region" description="Gly residues" evidence="3">
    <location>
        <begin position="46"/>
        <end position="97"/>
    </location>
</feature>
<feature type="compositionally biased region" description="Basic and acidic residues" evidence="3">
    <location>
        <begin position="103"/>
        <end position="119"/>
    </location>
</feature>
<feature type="compositionally biased region" description="Low complexity" evidence="3">
    <location>
        <begin position="157"/>
        <end position="170"/>
    </location>
</feature>
<feature type="compositionally biased region" description="Polar residues" evidence="3">
    <location>
        <begin position="214"/>
        <end position="225"/>
    </location>
</feature>
<feature type="compositionally biased region" description="Basic and acidic residues" evidence="3">
    <location>
        <begin position="226"/>
        <end position="254"/>
    </location>
</feature>
<feature type="modified residue" description="N-acetylalanine" evidence="5">
    <location>
        <position position="2"/>
    </location>
</feature>
<feature type="modified residue" description="Phosphothreonine" evidence="2">
    <location>
        <position position="4"/>
    </location>
</feature>
<feature type="modified residue" description="Phosphoserine" evidence="2">
    <location>
        <position position="8"/>
    </location>
</feature>
<feature type="modified residue" description="Phosphotyrosine; by ABL" evidence="5">
    <location>
        <position position="120"/>
    </location>
</feature>
<feature type="modified residue" description="Phosphoserine" evidence="2">
    <location>
        <position position="131"/>
    </location>
</feature>
<feature type="modified residue" description="Phosphoserine" evidence="1">
    <location>
        <position position="155"/>
    </location>
</feature>
<feature type="modified residue" description="Phosphothreonine" evidence="2">
    <location>
        <position position="205"/>
    </location>
</feature>
<feature type="modified residue" description="Phosphotyrosine" evidence="8 9">
    <location>
        <position position="213"/>
    </location>
</feature>
<feature type="modified residue" description="Phosphotyrosine" evidence="2">
    <location>
        <position position="267"/>
    </location>
</feature>
<feature type="splice variant" id="VSP_027762" description="In isoform 2." evidence="6">
    <original>KDKEM</original>
    <variation>NRYLK</variation>
    <location>
        <begin position="232"/>
        <end position="236"/>
    </location>
</feature>
<feature type="splice variant" id="VSP_027763" description="In isoform 2." evidence="6">
    <location>
        <begin position="237"/>
        <end position="281"/>
    </location>
</feature>
<feature type="sequence conflict" description="In Ref. 3; AAH62156." evidence="7" ref="3">
    <location>
        <begin position="81"/>
        <end position="88"/>
    </location>
</feature>
<feature type="sequence conflict" description="In Ref. 3; AAH96479." evidence="7" ref="3">
    <original>T</original>
    <variation>M</variation>
    <location>
        <position position="216"/>
    </location>
</feature>
<feature type="sequence conflict" description="In Ref. 3; AAH96479." evidence="7" ref="3">
    <original>L</original>
    <variation>F</variation>
    <location>
        <position position="259"/>
    </location>
</feature>
<gene>
    <name type="primary">Cdv3</name>
</gene>